<comment type="function">
    <text evidence="1">Peptide chain release factor 1 directs the termination of translation in response to the peptide chain termination codons UAG and UAA.</text>
</comment>
<comment type="subcellular location">
    <subcellularLocation>
        <location evidence="1">Cytoplasm</location>
    </subcellularLocation>
</comment>
<comment type="PTM">
    <text evidence="1">Methylated by PrmC. Methylation increases the termination efficiency of RF1.</text>
</comment>
<comment type="similarity">
    <text evidence="1">Belongs to the prokaryotic/mitochondrial release factor family.</text>
</comment>
<name>RF1_NOSS1</name>
<organism>
    <name type="scientific">Nostoc sp. (strain PCC 7120 / SAG 25.82 / UTEX 2576)</name>
    <dbReference type="NCBI Taxonomy" id="103690"/>
    <lineage>
        <taxon>Bacteria</taxon>
        <taxon>Bacillati</taxon>
        <taxon>Cyanobacteriota</taxon>
        <taxon>Cyanophyceae</taxon>
        <taxon>Nostocales</taxon>
        <taxon>Nostocaceae</taxon>
        <taxon>Nostoc</taxon>
    </lineage>
</organism>
<accession>Q8YPK9</accession>
<gene>
    <name evidence="1" type="primary">prfA</name>
    <name type="ordered locus">all4185</name>
</gene>
<sequence>MAESYLLEKLKSVEQTFNELTRRLGDPDTAKNPDEYQKIAKSRSSLEEVVETYDNWKIAQEELIGARQVLKEANSDPDMHEMAALEVKELEEKIDYLETRLKVLLLPRDPNDDKNIMLEIRAGTGGDEASIWAGDLLRMYSRYADTQGWRVKLVSESLGEMGGFKEVILEIQGESVYSKLKFEAGVHRVQRVPATEAGGRVHTSTATVAIMPEVDEVEIHIDPKDIEMTTARSGGAGGQNVNKVETAVDLMHKPTGIRIFCTEERSQLQNKERAMQILRAKLYEIKLREQQEEVTSMRRSQVGTGSRSEKIRTYNYKDSRATDHRLGQNFSLNPVLEGDLETVIQSCISQDQQERLAELATSSAAG</sequence>
<feature type="chain" id="PRO_0000177623" description="Peptide chain release factor 1">
    <location>
        <begin position="1"/>
        <end position="366"/>
    </location>
</feature>
<feature type="modified residue" description="N5-methylglutamine" evidence="1">
    <location>
        <position position="239"/>
    </location>
</feature>
<reference key="1">
    <citation type="journal article" date="2001" name="DNA Res.">
        <title>Complete genomic sequence of the filamentous nitrogen-fixing cyanobacterium Anabaena sp. strain PCC 7120.</title>
        <authorList>
            <person name="Kaneko T."/>
            <person name="Nakamura Y."/>
            <person name="Wolk C.P."/>
            <person name="Kuritz T."/>
            <person name="Sasamoto S."/>
            <person name="Watanabe A."/>
            <person name="Iriguchi M."/>
            <person name="Ishikawa A."/>
            <person name="Kawashima K."/>
            <person name="Kimura T."/>
            <person name="Kishida Y."/>
            <person name="Kohara M."/>
            <person name="Matsumoto M."/>
            <person name="Matsuno A."/>
            <person name="Muraki A."/>
            <person name="Nakazaki N."/>
            <person name="Shimpo S."/>
            <person name="Sugimoto M."/>
            <person name="Takazawa M."/>
            <person name="Yamada M."/>
            <person name="Yasuda M."/>
            <person name="Tabata S."/>
        </authorList>
    </citation>
    <scope>NUCLEOTIDE SEQUENCE [LARGE SCALE GENOMIC DNA]</scope>
    <source>
        <strain>PCC 7120 / SAG 25.82 / UTEX 2576</strain>
    </source>
</reference>
<proteinExistence type="inferred from homology"/>
<keyword id="KW-0963">Cytoplasm</keyword>
<keyword id="KW-0488">Methylation</keyword>
<keyword id="KW-0648">Protein biosynthesis</keyword>
<keyword id="KW-1185">Reference proteome</keyword>
<protein>
    <recommendedName>
        <fullName evidence="1">Peptide chain release factor 1</fullName>
        <shortName evidence="1">RF-1</shortName>
    </recommendedName>
</protein>
<dbReference type="EMBL" id="BA000019">
    <property type="protein sequence ID" value="BAB75884.1"/>
    <property type="molecule type" value="Genomic_DNA"/>
</dbReference>
<dbReference type="PIR" id="AB2329">
    <property type="entry name" value="AB2329"/>
</dbReference>
<dbReference type="RefSeq" id="WP_010998324.1">
    <property type="nucleotide sequence ID" value="NZ_RSCN01000010.1"/>
</dbReference>
<dbReference type="SMR" id="Q8YPK9"/>
<dbReference type="STRING" id="103690.gene:10496234"/>
<dbReference type="KEGG" id="ana:all4185"/>
<dbReference type="eggNOG" id="COG0216">
    <property type="taxonomic scope" value="Bacteria"/>
</dbReference>
<dbReference type="OrthoDB" id="9806673at2"/>
<dbReference type="Proteomes" id="UP000002483">
    <property type="component" value="Chromosome"/>
</dbReference>
<dbReference type="GO" id="GO:0005737">
    <property type="term" value="C:cytoplasm"/>
    <property type="evidence" value="ECO:0007669"/>
    <property type="project" value="UniProtKB-SubCell"/>
</dbReference>
<dbReference type="GO" id="GO:0016149">
    <property type="term" value="F:translation release factor activity, codon specific"/>
    <property type="evidence" value="ECO:0007669"/>
    <property type="project" value="UniProtKB-UniRule"/>
</dbReference>
<dbReference type="FunFam" id="3.30.160.20:FF:000004">
    <property type="entry name" value="Peptide chain release factor 1"/>
    <property type="match status" value="1"/>
</dbReference>
<dbReference type="FunFam" id="3.30.70.1660:FF:000002">
    <property type="entry name" value="Peptide chain release factor 1"/>
    <property type="match status" value="1"/>
</dbReference>
<dbReference type="FunFam" id="3.30.70.1660:FF:000014">
    <property type="entry name" value="Peptide chain release factor 1"/>
    <property type="match status" value="1"/>
</dbReference>
<dbReference type="Gene3D" id="3.30.160.20">
    <property type="match status" value="1"/>
</dbReference>
<dbReference type="Gene3D" id="3.30.70.1660">
    <property type="match status" value="2"/>
</dbReference>
<dbReference type="Gene3D" id="6.10.140.1950">
    <property type="match status" value="1"/>
</dbReference>
<dbReference type="HAMAP" id="MF_00093">
    <property type="entry name" value="Rel_fac_1"/>
    <property type="match status" value="1"/>
</dbReference>
<dbReference type="InterPro" id="IPR005139">
    <property type="entry name" value="PCRF"/>
</dbReference>
<dbReference type="InterPro" id="IPR000352">
    <property type="entry name" value="Pep_chain_release_fac_I"/>
</dbReference>
<dbReference type="InterPro" id="IPR045853">
    <property type="entry name" value="Pep_chain_release_fac_I_sf"/>
</dbReference>
<dbReference type="InterPro" id="IPR050057">
    <property type="entry name" value="Prokaryotic/Mito_RF"/>
</dbReference>
<dbReference type="InterPro" id="IPR004373">
    <property type="entry name" value="RF-1"/>
</dbReference>
<dbReference type="NCBIfam" id="TIGR00019">
    <property type="entry name" value="prfA"/>
    <property type="match status" value="1"/>
</dbReference>
<dbReference type="NCBIfam" id="NF001859">
    <property type="entry name" value="PRK00591.1"/>
    <property type="match status" value="1"/>
</dbReference>
<dbReference type="PANTHER" id="PTHR43804">
    <property type="entry name" value="LD18447P"/>
    <property type="match status" value="1"/>
</dbReference>
<dbReference type="PANTHER" id="PTHR43804:SF8">
    <property type="entry name" value="PEPTIDE CHAIN RELEASE FACTOR APG3, CHLOROPLASTIC"/>
    <property type="match status" value="1"/>
</dbReference>
<dbReference type="Pfam" id="PF03462">
    <property type="entry name" value="PCRF"/>
    <property type="match status" value="1"/>
</dbReference>
<dbReference type="Pfam" id="PF00472">
    <property type="entry name" value="RF-1"/>
    <property type="match status" value="1"/>
</dbReference>
<dbReference type="SMART" id="SM00937">
    <property type="entry name" value="PCRF"/>
    <property type="match status" value="1"/>
</dbReference>
<dbReference type="SUPFAM" id="SSF75620">
    <property type="entry name" value="Release factor"/>
    <property type="match status" value="1"/>
</dbReference>
<dbReference type="PROSITE" id="PS00745">
    <property type="entry name" value="RF_PROK_I"/>
    <property type="match status" value="1"/>
</dbReference>
<evidence type="ECO:0000255" key="1">
    <source>
        <dbReference type="HAMAP-Rule" id="MF_00093"/>
    </source>
</evidence>